<accession>Q1I5W1</accession>
<comment type="function">
    <text evidence="1">Catalyzes the complicated ring closure reaction between the two acyclic compounds 1-deoxy-D-xylulose-5-phosphate (DXP) and 3-amino-2-oxopropyl phosphate (1-amino-acetone-3-phosphate or AAP) to form pyridoxine 5'-phosphate (PNP) and inorganic phosphate.</text>
</comment>
<comment type="catalytic activity">
    <reaction evidence="1">
        <text>3-amino-2-oxopropyl phosphate + 1-deoxy-D-xylulose 5-phosphate = pyridoxine 5'-phosphate + phosphate + 2 H2O + H(+)</text>
        <dbReference type="Rhea" id="RHEA:15265"/>
        <dbReference type="ChEBI" id="CHEBI:15377"/>
        <dbReference type="ChEBI" id="CHEBI:15378"/>
        <dbReference type="ChEBI" id="CHEBI:43474"/>
        <dbReference type="ChEBI" id="CHEBI:57279"/>
        <dbReference type="ChEBI" id="CHEBI:57792"/>
        <dbReference type="ChEBI" id="CHEBI:58589"/>
        <dbReference type="EC" id="2.6.99.2"/>
    </reaction>
</comment>
<comment type="pathway">
    <text evidence="1">Cofactor biosynthesis; pyridoxine 5'-phosphate biosynthesis; pyridoxine 5'-phosphate from D-erythrose 4-phosphate: step 5/5.</text>
</comment>
<comment type="subunit">
    <text evidence="1">Homooctamer; tetramer of dimers.</text>
</comment>
<comment type="subcellular location">
    <subcellularLocation>
        <location evidence="1">Cytoplasm</location>
    </subcellularLocation>
</comment>
<comment type="similarity">
    <text evidence="1">Belongs to the PNP synthase family.</text>
</comment>
<dbReference type="EC" id="2.6.99.2" evidence="1"/>
<dbReference type="EMBL" id="CT573326">
    <property type="protein sequence ID" value="CAK16974.1"/>
    <property type="molecule type" value="Genomic_DNA"/>
</dbReference>
<dbReference type="SMR" id="Q1I5W1"/>
<dbReference type="STRING" id="384676.PSEEN4287"/>
<dbReference type="KEGG" id="pen:PSEEN4287"/>
<dbReference type="eggNOG" id="COG0854">
    <property type="taxonomic scope" value="Bacteria"/>
</dbReference>
<dbReference type="HOGENOM" id="CLU_074563_0_0_6"/>
<dbReference type="UniPathway" id="UPA00244">
    <property type="reaction ID" value="UER00313"/>
</dbReference>
<dbReference type="Proteomes" id="UP000000658">
    <property type="component" value="Chromosome"/>
</dbReference>
<dbReference type="GO" id="GO:0005829">
    <property type="term" value="C:cytosol"/>
    <property type="evidence" value="ECO:0007669"/>
    <property type="project" value="TreeGrafter"/>
</dbReference>
<dbReference type="GO" id="GO:0033856">
    <property type="term" value="F:pyridoxine 5'-phosphate synthase activity"/>
    <property type="evidence" value="ECO:0007669"/>
    <property type="project" value="UniProtKB-EC"/>
</dbReference>
<dbReference type="GO" id="GO:0008615">
    <property type="term" value="P:pyridoxine biosynthetic process"/>
    <property type="evidence" value="ECO:0007669"/>
    <property type="project" value="UniProtKB-UniRule"/>
</dbReference>
<dbReference type="CDD" id="cd00003">
    <property type="entry name" value="PNPsynthase"/>
    <property type="match status" value="1"/>
</dbReference>
<dbReference type="FunFam" id="3.20.20.70:FF:000042">
    <property type="entry name" value="Pyridoxine 5'-phosphate synthase"/>
    <property type="match status" value="1"/>
</dbReference>
<dbReference type="Gene3D" id="3.20.20.70">
    <property type="entry name" value="Aldolase class I"/>
    <property type="match status" value="1"/>
</dbReference>
<dbReference type="HAMAP" id="MF_00279">
    <property type="entry name" value="PdxJ"/>
    <property type="match status" value="1"/>
</dbReference>
<dbReference type="InterPro" id="IPR013785">
    <property type="entry name" value="Aldolase_TIM"/>
</dbReference>
<dbReference type="InterPro" id="IPR004569">
    <property type="entry name" value="PyrdxlP_synth_PdxJ"/>
</dbReference>
<dbReference type="InterPro" id="IPR036130">
    <property type="entry name" value="Pyridoxine-5'_phos_synth"/>
</dbReference>
<dbReference type="NCBIfam" id="TIGR00559">
    <property type="entry name" value="pdxJ"/>
    <property type="match status" value="1"/>
</dbReference>
<dbReference type="NCBIfam" id="NF003623">
    <property type="entry name" value="PRK05265.1-1"/>
    <property type="match status" value="1"/>
</dbReference>
<dbReference type="NCBIfam" id="NF003625">
    <property type="entry name" value="PRK05265.1-3"/>
    <property type="match status" value="1"/>
</dbReference>
<dbReference type="NCBIfam" id="NF003627">
    <property type="entry name" value="PRK05265.1-5"/>
    <property type="match status" value="1"/>
</dbReference>
<dbReference type="PANTHER" id="PTHR30456">
    <property type="entry name" value="PYRIDOXINE 5'-PHOSPHATE SYNTHASE"/>
    <property type="match status" value="1"/>
</dbReference>
<dbReference type="PANTHER" id="PTHR30456:SF0">
    <property type="entry name" value="PYRIDOXINE 5'-PHOSPHATE SYNTHASE"/>
    <property type="match status" value="1"/>
</dbReference>
<dbReference type="Pfam" id="PF03740">
    <property type="entry name" value="PdxJ"/>
    <property type="match status" value="1"/>
</dbReference>
<dbReference type="SUPFAM" id="SSF63892">
    <property type="entry name" value="Pyridoxine 5'-phosphate synthase"/>
    <property type="match status" value="1"/>
</dbReference>
<sequence>MLLGVNIDHVATLRQARGTRYPDPVKAALDAEEAGADGITVHLREDRRHIQERDVLLLKDVLQTRMNFEMGVTEEMMLFAEKIRPAHICLVPETRQELTTEGGLDVAGQEARIKAAVERLSRTGAEVSLFIDADERQIEASRRVGAPAIELHTGRYADAETPTDVAEELKRIVDGVAFGVGQGLIVNAGHGLHYHNVEAVAAIKGINELNIGHALVAHALFVGFKAAVAEMKALIVAASR</sequence>
<organism>
    <name type="scientific">Pseudomonas entomophila (strain L48)</name>
    <dbReference type="NCBI Taxonomy" id="384676"/>
    <lineage>
        <taxon>Bacteria</taxon>
        <taxon>Pseudomonadati</taxon>
        <taxon>Pseudomonadota</taxon>
        <taxon>Gammaproteobacteria</taxon>
        <taxon>Pseudomonadales</taxon>
        <taxon>Pseudomonadaceae</taxon>
        <taxon>Pseudomonas</taxon>
    </lineage>
</organism>
<feature type="chain" id="PRO_1000022392" description="Pyridoxine 5'-phosphate synthase">
    <location>
        <begin position="1"/>
        <end position="240"/>
    </location>
</feature>
<feature type="active site" description="Proton acceptor" evidence="1">
    <location>
        <position position="42"/>
    </location>
</feature>
<feature type="active site" description="Proton acceptor" evidence="1">
    <location>
        <position position="69"/>
    </location>
</feature>
<feature type="active site" description="Proton donor" evidence="1">
    <location>
        <position position="190"/>
    </location>
</feature>
<feature type="binding site" evidence="1">
    <location>
        <position position="6"/>
    </location>
    <ligand>
        <name>3-amino-2-oxopropyl phosphate</name>
        <dbReference type="ChEBI" id="CHEBI:57279"/>
    </ligand>
</feature>
<feature type="binding site" evidence="1">
    <location>
        <begin position="8"/>
        <end position="9"/>
    </location>
    <ligand>
        <name>1-deoxy-D-xylulose 5-phosphate</name>
        <dbReference type="ChEBI" id="CHEBI:57792"/>
    </ligand>
</feature>
<feature type="binding site" evidence="1">
    <location>
        <position position="17"/>
    </location>
    <ligand>
        <name>3-amino-2-oxopropyl phosphate</name>
        <dbReference type="ChEBI" id="CHEBI:57279"/>
    </ligand>
</feature>
<feature type="binding site" evidence="1">
    <location>
        <position position="44"/>
    </location>
    <ligand>
        <name>1-deoxy-D-xylulose 5-phosphate</name>
        <dbReference type="ChEBI" id="CHEBI:57792"/>
    </ligand>
</feature>
<feature type="binding site" evidence="1">
    <location>
        <position position="49"/>
    </location>
    <ligand>
        <name>1-deoxy-D-xylulose 5-phosphate</name>
        <dbReference type="ChEBI" id="CHEBI:57792"/>
    </ligand>
</feature>
<feature type="binding site" evidence="1">
    <location>
        <position position="99"/>
    </location>
    <ligand>
        <name>1-deoxy-D-xylulose 5-phosphate</name>
        <dbReference type="ChEBI" id="CHEBI:57792"/>
    </ligand>
</feature>
<feature type="binding site" evidence="1">
    <location>
        <position position="191"/>
    </location>
    <ligand>
        <name>3-amino-2-oxopropyl phosphate</name>
        <dbReference type="ChEBI" id="CHEBI:57279"/>
    </ligand>
</feature>
<feature type="binding site" evidence="1">
    <location>
        <begin position="212"/>
        <end position="213"/>
    </location>
    <ligand>
        <name>3-amino-2-oxopropyl phosphate</name>
        <dbReference type="ChEBI" id="CHEBI:57279"/>
    </ligand>
</feature>
<feature type="site" description="Transition state stabilizer" evidence="1">
    <location>
        <position position="150"/>
    </location>
</feature>
<gene>
    <name evidence="1" type="primary">pdxJ</name>
    <name type="ordered locus">PSEEN4287</name>
</gene>
<protein>
    <recommendedName>
        <fullName evidence="1">Pyridoxine 5'-phosphate synthase</fullName>
        <shortName evidence="1">PNP synthase</shortName>
        <ecNumber evidence="1">2.6.99.2</ecNumber>
    </recommendedName>
</protein>
<evidence type="ECO:0000255" key="1">
    <source>
        <dbReference type="HAMAP-Rule" id="MF_00279"/>
    </source>
</evidence>
<name>PDXJ_PSEE4</name>
<proteinExistence type="inferred from homology"/>
<reference key="1">
    <citation type="journal article" date="2006" name="Nat. Biotechnol.">
        <title>Complete genome sequence of the entomopathogenic and metabolically versatile soil bacterium Pseudomonas entomophila.</title>
        <authorList>
            <person name="Vodovar N."/>
            <person name="Vallenet D."/>
            <person name="Cruveiller S."/>
            <person name="Rouy Z."/>
            <person name="Barbe V."/>
            <person name="Acosta C."/>
            <person name="Cattolico L."/>
            <person name="Jubin C."/>
            <person name="Lajus A."/>
            <person name="Segurens B."/>
            <person name="Vacherie B."/>
            <person name="Wincker P."/>
            <person name="Weissenbach J."/>
            <person name="Lemaitre B."/>
            <person name="Medigue C."/>
            <person name="Boccard F."/>
        </authorList>
    </citation>
    <scope>NUCLEOTIDE SEQUENCE [LARGE SCALE GENOMIC DNA]</scope>
    <source>
        <strain>L48</strain>
    </source>
</reference>
<keyword id="KW-0963">Cytoplasm</keyword>
<keyword id="KW-0664">Pyridoxine biosynthesis</keyword>
<keyword id="KW-0808">Transferase</keyword>